<comment type="function">
    <text evidence="1">Essential for ribosome biogenesis.</text>
</comment>
<comment type="similarity">
    <text evidence="6">Belongs to the LTV1 family.</text>
</comment>
<sequence>MPHRKKKPFIEKKKAVSFHLVHRSQRDPLAADETAPQRVLLPTQKIKDEERRAEQRKYGVFFDDDYDYLQHLKEPSGPSELIPTSPFGAPYRGDGREEPLATSTSGIKLPSSVFASEFEEDVGLLNKAAPVSGPRLDFDPDIVAALDDDFDFDNPDNLLEDDFILQANKPTEEEEGMEIQKSEAEDDSEWEDVDDEKEGGSDDDRYDRAGSSDEDMSAPGKPLGAIENHFFWEEETKSRFTEYSLTSSVMRRNEQLTLHDERFEKFYEQYDDDEIGALDNAELEGSIQVDSNRLEEVLNDYYKEKAENCVKLNTLEPFEDQDLPVNELDGSEEEETVTVVLEEAKEKWDCESICSTYSNVYNHPQLIKYQPKPKQIRLSSKTGIPLNVLPKKGLTAKQVERMQMINNSDLPKTSTQPRLKRESKEDKRARKRAIKEERKERRVEKKANKLAFKLEKRRQEKELLNLKKNVEGLKL</sequence>
<name>LTV1_BOVIN</name>
<evidence type="ECO:0000250" key="1">
    <source>
        <dbReference type="UniProtKB" id="Q5U3J8"/>
    </source>
</evidence>
<evidence type="ECO:0000250" key="2">
    <source>
        <dbReference type="UniProtKB" id="Q6NSQ7"/>
    </source>
</evidence>
<evidence type="ECO:0000250" key="3">
    <source>
        <dbReference type="UniProtKB" id="Q96GA3"/>
    </source>
</evidence>
<evidence type="ECO:0000255" key="4"/>
<evidence type="ECO:0000256" key="5">
    <source>
        <dbReference type="SAM" id="MobiDB-lite"/>
    </source>
</evidence>
<evidence type="ECO:0000305" key="6"/>
<protein>
    <recommendedName>
        <fullName>Protein LTV1 homolog</fullName>
    </recommendedName>
</protein>
<gene>
    <name type="primary">LTV1</name>
</gene>
<reference key="1">
    <citation type="submission" date="2006-08" db="EMBL/GenBank/DDBJ databases">
        <authorList>
            <consortium name="NIH - Mammalian Gene Collection (MGC) project"/>
        </authorList>
    </citation>
    <scope>NUCLEOTIDE SEQUENCE [LARGE SCALE MRNA]</scope>
    <source>
        <strain>Hereford</strain>
        <tissue>Basal ganglia</tissue>
    </source>
</reference>
<organism>
    <name type="scientific">Bos taurus</name>
    <name type="common">Bovine</name>
    <dbReference type="NCBI Taxonomy" id="9913"/>
    <lineage>
        <taxon>Eukaryota</taxon>
        <taxon>Metazoa</taxon>
        <taxon>Chordata</taxon>
        <taxon>Craniata</taxon>
        <taxon>Vertebrata</taxon>
        <taxon>Euteleostomi</taxon>
        <taxon>Mammalia</taxon>
        <taxon>Eutheria</taxon>
        <taxon>Laurasiatheria</taxon>
        <taxon>Artiodactyla</taxon>
        <taxon>Ruminantia</taxon>
        <taxon>Pecora</taxon>
        <taxon>Bovidae</taxon>
        <taxon>Bovinae</taxon>
        <taxon>Bos</taxon>
    </lineage>
</organism>
<keyword id="KW-0175">Coiled coil</keyword>
<keyword id="KW-0597">Phosphoprotein</keyword>
<keyword id="KW-1185">Reference proteome</keyword>
<keyword id="KW-0690">Ribosome biogenesis</keyword>
<accession>Q0VC06</accession>
<dbReference type="EMBL" id="BC120412">
    <property type="protein sequence ID" value="AAI20413.1"/>
    <property type="molecule type" value="mRNA"/>
</dbReference>
<dbReference type="RefSeq" id="NP_001068794.1">
    <property type="nucleotide sequence ID" value="NM_001075326.1"/>
</dbReference>
<dbReference type="FunCoup" id="Q0VC06">
    <property type="interactions" value="2929"/>
</dbReference>
<dbReference type="STRING" id="9913.ENSBTAP00000068757"/>
<dbReference type="PaxDb" id="9913-ENSBTAP00000021934"/>
<dbReference type="Ensembl" id="ENSBTAT00000021934.5">
    <property type="protein sequence ID" value="ENSBTAP00000021934.4"/>
    <property type="gene ID" value="ENSBTAG00000032163.4"/>
</dbReference>
<dbReference type="GeneID" id="507702"/>
<dbReference type="KEGG" id="bta:507702"/>
<dbReference type="CTD" id="84946"/>
<dbReference type="VEuPathDB" id="HostDB:ENSBTAG00000032163"/>
<dbReference type="eggNOG" id="KOG2637">
    <property type="taxonomic scope" value="Eukaryota"/>
</dbReference>
<dbReference type="GeneTree" id="ENSGT00390000002789"/>
<dbReference type="HOGENOM" id="CLU_035718_0_0_1"/>
<dbReference type="InParanoid" id="Q0VC06"/>
<dbReference type="OrthoDB" id="5852896at2759"/>
<dbReference type="TreeFam" id="TF314845"/>
<dbReference type="Reactome" id="R-BTA-6791226">
    <property type="pathway name" value="Major pathway of rRNA processing in the nucleolus and cytosol"/>
</dbReference>
<dbReference type="Proteomes" id="UP000009136">
    <property type="component" value="Chromosome 9"/>
</dbReference>
<dbReference type="Bgee" id="ENSBTAG00000032163">
    <property type="expression patterns" value="Expressed in oocyte and 109 other cell types or tissues"/>
</dbReference>
<dbReference type="GO" id="GO:0005829">
    <property type="term" value="C:cytosol"/>
    <property type="evidence" value="ECO:0000318"/>
    <property type="project" value="GO_Central"/>
</dbReference>
<dbReference type="GO" id="GO:0005634">
    <property type="term" value="C:nucleus"/>
    <property type="evidence" value="ECO:0000318"/>
    <property type="project" value="GO_Central"/>
</dbReference>
<dbReference type="GO" id="GO:0030688">
    <property type="term" value="C:preribosome, small subunit precursor"/>
    <property type="evidence" value="ECO:0000318"/>
    <property type="project" value="GO_Central"/>
</dbReference>
<dbReference type="GO" id="GO:0042274">
    <property type="term" value="P:ribosomal small subunit biogenesis"/>
    <property type="evidence" value="ECO:0000318"/>
    <property type="project" value="GO_Central"/>
</dbReference>
<dbReference type="GO" id="GO:0000056">
    <property type="term" value="P:ribosomal small subunit export from nucleus"/>
    <property type="evidence" value="ECO:0000318"/>
    <property type="project" value="GO_Central"/>
</dbReference>
<dbReference type="GO" id="GO:0042254">
    <property type="term" value="P:ribosome biogenesis"/>
    <property type="evidence" value="ECO:0000250"/>
    <property type="project" value="UniProtKB"/>
</dbReference>
<dbReference type="InterPro" id="IPR007307">
    <property type="entry name" value="Ltv1"/>
</dbReference>
<dbReference type="PANTHER" id="PTHR21531">
    <property type="entry name" value="LOW-TEMPERATURE VIABILITY PROTEIN LTV1-RELATED"/>
    <property type="match status" value="1"/>
</dbReference>
<dbReference type="PANTHER" id="PTHR21531:SF0">
    <property type="entry name" value="PROTEIN LTV1 HOMOLOG"/>
    <property type="match status" value="1"/>
</dbReference>
<dbReference type="Pfam" id="PF04180">
    <property type="entry name" value="LTV"/>
    <property type="match status" value="2"/>
</dbReference>
<proteinExistence type="evidence at transcript level"/>
<feature type="chain" id="PRO_0000302812" description="Protein LTV1 homolog">
    <location>
        <begin position="1"/>
        <end position="475"/>
    </location>
</feature>
<feature type="region of interest" description="Disordered" evidence="5">
    <location>
        <begin position="23"/>
        <end position="53"/>
    </location>
</feature>
<feature type="region of interest" description="Disordered" evidence="5">
    <location>
        <begin position="73"/>
        <end position="104"/>
    </location>
</feature>
<feature type="region of interest" description="Disordered" evidence="5">
    <location>
        <begin position="161"/>
        <end position="223"/>
    </location>
</feature>
<feature type="region of interest" description="Disordered" evidence="5">
    <location>
        <begin position="406"/>
        <end position="447"/>
    </location>
</feature>
<feature type="coiled-coil region" evidence="4">
    <location>
        <begin position="419"/>
        <end position="475"/>
    </location>
</feature>
<feature type="compositionally biased region" description="Acidic residues" evidence="5">
    <location>
        <begin position="184"/>
        <end position="197"/>
    </location>
</feature>
<feature type="compositionally biased region" description="Basic and acidic residues" evidence="5">
    <location>
        <begin position="198"/>
        <end position="211"/>
    </location>
</feature>
<feature type="compositionally biased region" description="Polar residues" evidence="5">
    <location>
        <begin position="406"/>
        <end position="417"/>
    </location>
</feature>
<feature type="compositionally biased region" description="Basic and acidic residues" evidence="5">
    <location>
        <begin position="419"/>
        <end position="447"/>
    </location>
</feature>
<feature type="modified residue" description="Phosphoserine" evidence="3">
    <location>
        <position position="17"/>
    </location>
</feature>
<feature type="modified residue" description="Phosphoserine" evidence="3">
    <location>
        <position position="24"/>
    </location>
</feature>
<feature type="modified residue" description="Phosphoserine" evidence="2">
    <location>
        <position position="248"/>
    </location>
</feature>
<feature type="modified residue" description="Phosphoserine" evidence="3">
    <location>
        <position position="331"/>
    </location>
</feature>
<feature type="modified residue" description="Phosphoserine" evidence="3">
    <location>
        <position position="408"/>
    </location>
</feature>